<name>DNAG_HALH5</name>
<feature type="chain" id="PRO_0000180477" description="DNA primase">
    <location>
        <begin position="1"/>
        <end position="599"/>
    </location>
</feature>
<feature type="domain" description="Toprim" evidence="1">
    <location>
        <begin position="259"/>
        <end position="342"/>
    </location>
</feature>
<feature type="zinc finger region" description="CHC2-type" evidence="1">
    <location>
        <begin position="40"/>
        <end position="64"/>
    </location>
</feature>
<feature type="binding site" evidence="1">
    <location>
        <position position="265"/>
    </location>
    <ligand>
        <name>Mg(2+)</name>
        <dbReference type="ChEBI" id="CHEBI:18420"/>
        <label>1</label>
        <note>catalytic</note>
    </ligand>
</feature>
<feature type="binding site" evidence="1">
    <location>
        <position position="309"/>
    </location>
    <ligand>
        <name>Mg(2+)</name>
        <dbReference type="ChEBI" id="CHEBI:18420"/>
        <label>1</label>
        <note>catalytic</note>
    </ligand>
</feature>
<feature type="binding site" evidence="1">
    <location>
        <position position="309"/>
    </location>
    <ligand>
        <name>Mg(2+)</name>
        <dbReference type="ChEBI" id="CHEBI:18420"/>
        <label>2</label>
    </ligand>
</feature>
<feature type="binding site" evidence="1">
    <location>
        <position position="311"/>
    </location>
    <ligand>
        <name>Mg(2+)</name>
        <dbReference type="ChEBI" id="CHEBI:18420"/>
        <label>2</label>
    </ligand>
</feature>
<dbReference type="EC" id="2.7.7.101" evidence="1"/>
<dbReference type="EMBL" id="BA000004">
    <property type="protein sequence ID" value="BAB05094.1"/>
    <property type="molecule type" value="Genomic_DNA"/>
</dbReference>
<dbReference type="PIR" id="G83821">
    <property type="entry name" value="G83821"/>
</dbReference>
<dbReference type="RefSeq" id="WP_010897540.1">
    <property type="nucleotide sequence ID" value="NC_002570.2"/>
</dbReference>
<dbReference type="SMR" id="Q9KD44"/>
<dbReference type="STRING" id="272558.gene:10727269"/>
<dbReference type="KEGG" id="bha:BH1375"/>
<dbReference type="eggNOG" id="COG0358">
    <property type="taxonomic scope" value="Bacteria"/>
</dbReference>
<dbReference type="HOGENOM" id="CLU_013501_3_3_9"/>
<dbReference type="OrthoDB" id="9803773at2"/>
<dbReference type="Proteomes" id="UP000001258">
    <property type="component" value="Chromosome"/>
</dbReference>
<dbReference type="GO" id="GO:0005737">
    <property type="term" value="C:cytoplasm"/>
    <property type="evidence" value="ECO:0007669"/>
    <property type="project" value="TreeGrafter"/>
</dbReference>
<dbReference type="GO" id="GO:0000428">
    <property type="term" value="C:DNA-directed RNA polymerase complex"/>
    <property type="evidence" value="ECO:0007669"/>
    <property type="project" value="UniProtKB-KW"/>
</dbReference>
<dbReference type="GO" id="GO:1990077">
    <property type="term" value="C:primosome complex"/>
    <property type="evidence" value="ECO:0007669"/>
    <property type="project" value="UniProtKB-KW"/>
</dbReference>
<dbReference type="GO" id="GO:0005524">
    <property type="term" value="F:ATP binding"/>
    <property type="evidence" value="ECO:0007669"/>
    <property type="project" value="InterPro"/>
</dbReference>
<dbReference type="GO" id="GO:0003677">
    <property type="term" value="F:DNA binding"/>
    <property type="evidence" value="ECO:0007669"/>
    <property type="project" value="UniProtKB-KW"/>
</dbReference>
<dbReference type="GO" id="GO:0003678">
    <property type="term" value="F:DNA helicase activity"/>
    <property type="evidence" value="ECO:0007669"/>
    <property type="project" value="InterPro"/>
</dbReference>
<dbReference type="GO" id="GO:0003899">
    <property type="term" value="F:DNA-directed RNA polymerase activity"/>
    <property type="evidence" value="ECO:0007669"/>
    <property type="project" value="InterPro"/>
</dbReference>
<dbReference type="GO" id="GO:0008270">
    <property type="term" value="F:zinc ion binding"/>
    <property type="evidence" value="ECO:0007669"/>
    <property type="project" value="UniProtKB-UniRule"/>
</dbReference>
<dbReference type="GO" id="GO:0006269">
    <property type="term" value="P:DNA replication, synthesis of primer"/>
    <property type="evidence" value="ECO:0007669"/>
    <property type="project" value="UniProtKB-UniRule"/>
</dbReference>
<dbReference type="CDD" id="cd03364">
    <property type="entry name" value="TOPRIM_DnaG_primases"/>
    <property type="match status" value="1"/>
</dbReference>
<dbReference type="FunFam" id="3.90.580.10:FF:000001">
    <property type="entry name" value="DNA primase"/>
    <property type="match status" value="1"/>
</dbReference>
<dbReference type="FunFam" id="3.90.980.10:FF:000001">
    <property type="entry name" value="DNA primase"/>
    <property type="match status" value="1"/>
</dbReference>
<dbReference type="Gene3D" id="3.40.1360.10">
    <property type="match status" value="1"/>
</dbReference>
<dbReference type="Gene3D" id="3.90.980.10">
    <property type="entry name" value="DNA primase, catalytic core, N-terminal domain"/>
    <property type="match status" value="1"/>
</dbReference>
<dbReference type="Gene3D" id="1.10.860.10">
    <property type="entry name" value="DNAb Helicase, Chain A"/>
    <property type="match status" value="1"/>
</dbReference>
<dbReference type="Gene3D" id="3.90.580.10">
    <property type="entry name" value="Zinc finger, CHC2-type domain"/>
    <property type="match status" value="1"/>
</dbReference>
<dbReference type="HAMAP" id="MF_00974">
    <property type="entry name" value="DNA_primase_DnaG"/>
    <property type="match status" value="1"/>
</dbReference>
<dbReference type="InterPro" id="IPR036185">
    <property type="entry name" value="DNA_heli_DnaB-like_N_sf"/>
</dbReference>
<dbReference type="InterPro" id="IPR016136">
    <property type="entry name" value="DNA_helicase_N/primase_C"/>
</dbReference>
<dbReference type="InterPro" id="IPR037068">
    <property type="entry name" value="DNA_primase_core_N_sf"/>
</dbReference>
<dbReference type="InterPro" id="IPR019475">
    <property type="entry name" value="DNA_primase_DnaB-bd"/>
</dbReference>
<dbReference type="InterPro" id="IPR006295">
    <property type="entry name" value="DNA_primase_DnaG"/>
</dbReference>
<dbReference type="InterPro" id="IPR036977">
    <property type="entry name" value="DNA_primase_Znf_CHC2"/>
</dbReference>
<dbReference type="InterPro" id="IPR030846">
    <property type="entry name" value="DnaG_bac"/>
</dbReference>
<dbReference type="InterPro" id="IPR013264">
    <property type="entry name" value="DNAG_N"/>
</dbReference>
<dbReference type="InterPro" id="IPR050219">
    <property type="entry name" value="DnaG_primase"/>
</dbReference>
<dbReference type="InterPro" id="IPR034151">
    <property type="entry name" value="TOPRIM_DnaG_bac"/>
</dbReference>
<dbReference type="InterPro" id="IPR006171">
    <property type="entry name" value="TOPRIM_dom"/>
</dbReference>
<dbReference type="InterPro" id="IPR002694">
    <property type="entry name" value="Znf_CHC2"/>
</dbReference>
<dbReference type="NCBIfam" id="TIGR01391">
    <property type="entry name" value="dnaG"/>
    <property type="match status" value="1"/>
</dbReference>
<dbReference type="PANTHER" id="PTHR30313">
    <property type="entry name" value="DNA PRIMASE"/>
    <property type="match status" value="1"/>
</dbReference>
<dbReference type="PANTHER" id="PTHR30313:SF2">
    <property type="entry name" value="DNA PRIMASE"/>
    <property type="match status" value="1"/>
</dbReference>
<dbReference type="Pfam" id="PF10410">
    <property type="entry name" value="DnaB_bind"/>
    <property type="match status" value="1"/>
</dbReference>
<dbReference type="Pfam" id="PF08275">
    <property type="entry name" value="DNAG_N"/>
    <property type="match status" value="1"/>
</dbReference>
<dbReference type="Pfam" id="PF13155">
    <property type="entry name" value="Toprim_2"/>
    <property type="match status" value="1"/>
</dbReference>
<dbReference type="Pfam" id="PF01807">
    <property type="entry name" value="Zn_ribbon_DnaG"/>
    <property type="match status" value="1"/>
</dbReference>
<dbReference type="PIRSF" id="PIRSF002811">
    <property type="entry name" value="DnaG"/>
    <property type="match status" value="1"/>
</dbReference>
<dbReference type="SMART" id="SM00493">
    <property type="entry name" value="TOPRIM"/>
    <property type="match status" value="1"/>
</dbReference>
<dbReference type="SMART" id="SM00400">
    <property type="entry name" value="ZnF_CHCC"/>
    <property type="match status" value="1"/>
</dbReference>
<dbReference type="SUPFAM" id="SSF56731">
    <property type="entry name" value="DNA primase core"/>
    <property type="match status" value="1"/>
</dbReference>
<dbReference type="SUPFAM" id="SSF48024">
    <property type="entry name" value="N-terminal domain of DnaB helicase"/>
    <property type="match status" value="1"/>
</dbReference>
<dbReference type="SUPFAM" id="SSF57783">
    <property type="entry name" value="Zinc beta-ribbon"/>
    <property type="match status" value="1"/>
</dbReference>
<dbReference type="PROSITE" id="PS50880">
    <property type="entry name" value="TOPRIM"/>
    <property type="match status" value="1"/>
</dbReference>
<gene>
    <name evidence="1" type="primary">dnaG</name>
    <name type="ordered locus">BH1375</name>
</gene>
<sequence>MNQRIPQETIEEIRRSVDILDVIGEYVQLKKQGRNYIGLCPFHGENTPSFSVSPDKQLYHCFGCGAGGNAFTFLEQIEGFTFVEAVETLAKRANVVLPERVSPSVKQNRDEELLISIQEFAAKFFHHVLMLTEEGKAGRTYLERRGFTKEQIEHFQIGFAPPHWDALTNVLAKRDVDLKKAGESGLLVERESDGKRYDRFRNRVIFPIRNGKGKIVAFGGRTLGDDKPKYLNSPESPIFQKGKLLYGFYQARPAIRKENEAVLFEGYVDVIAAWKAGVTNGVATLGTSLTEEQARMIRRNAETVIICNDGDAAGAEATFRSADLLQQEGCHVKVAMIPDGLDPDDYIQKYGAERFKKDVIGESLTLMKFKMKYFRMGRNLQNEGERILYIEEIIKEIAKLSKAVERDHYLRQLAEEFSLSLDALKQEQYRIYREMKRQNQVSQGKTNTVRQKKHDFEQKRLLPAYQNAERILLAHMMRNVSVAETVQERLGGRFNVDHYQAIVAHLFAYYAEGFEPDPCTFIQRLEDQELIRVATELAMLEINEEINDQELNDYIEKIEMYPKWLELQQIESALKKETDPVLYATRKQELINMKKQLKL</sequence>
<protein>
    <recommendedName>
        <fullName evidence="1">DNA primase</fullName>
        <ecNumber evidence="1">2.7.7.101</ecNumber>
    </recommendedName>
</protein>
<comment type="function">
    <text evidence="1">RNA polymerase that catalyzes the synthesis of short RNA molecules used as primers for DNA polymerase during DNA replication.</text>
</comment>
<comment type="catalytic activity">
    <reaction evidence="1">
        <text>ssDNA + n NTP = ssDNA/pppN(pN)n-1 hybrid + (n-1) diphosphate.</text>
        <dbReference type="EC" id="2.7.7.101"/>
    </reaction>
</comment>
<comment type="cofactor">
    <cofactor evidence="1">
        <name>Zn(2+)</name>
        <dbReference type="ChEBI" id="CHEBI:29105"/>
    </cofactor>
    <text evidence="1">Binds 1 zinc ion per monomer.</text>
</comment>
<comment type="cofactor">
    <cofactor evidence="1">
        <name>Mg(2+)</name>
        <dbReference type="ChEBI" id="CHEBI:18420"/>
    </cofactor>
    <text evidence="1">Binds two Mg(2+) per subunit.</text>
</comment>
<comment type="subunit">
    <text evidence="1">Monomer. Interacts with DnaB.</text>
</comment>
<comment type="domain">
    <text evidence="1">Contains an N-terminal zinc-binding domain, a central core domain that contains the primase activity, and a C-terminal DnaB-binding domain.</text>
</comment>
<comment type="similarity">
    <text evidence="1">Belongs to the DnaG primase family.</text>
</comment>
<evidence type="ECO:0000255" key="1">
    <source>
        <dbReference type="HAMAP-Rule" id="MF_00974"/>
    </source>
</evidence>
<organism>
    <name type="scientific">Halalkalibacterium halodurans (strain ATCC BAA-125 / DSM 18197 / FERM 7344 / JCM 9153 / C-125)</name>
    <name type="common">Bacillus halodurans</name>
    <dbReference type="NCBI Taxonomy" id="272558"/>
    <lineage>
        <taxon>Bacteria</taxon>
        <taxon>Bacillati</taxon>
        <taxon>Bacillota</taxon>
        <taxon>Bacilli</taxon>
        <taxon>Bacillales</taxon>
        <taxon>Bacillaceae</taxon>
        <taxon>Halalkalibacterium (ex Joshi et al. 2022)</taxon>
    </lineage>
</organism>
<accession>Q9KD44</accession>
<reference key="1">
    <citation type="journal article" date="2000" name="Nucleic Acids Res.">
        <title>Complete genome sequence of the alkaliphilic bacterium Bacillus halodurans and genomic sequence comparison with Bacillus subtilis.</title>
        <authorList>
            <person name="Takami H."/>
            <person name="Nakasone K."/>
            <person name="Takaki Y."/>
            <person name="Maeno G."/>
            <person name="Sasaki R."/>
            <person name="Masui N."/>
            <person name="Fuji F."/>
            <person name="Hirama C."/>
            <person name="Nakamura Y."/>
            <person name="Ogasawara N."/>
            <person name="Kuhara S."/>
            <person name="Horikoshi K."/>
        </authorList>
    </citation>
    <scope>NUCLEOTIDE SEQUENCE [LARGE SCALE GENOMIC DNA]</scope>
    <source>
        <strain>ATCC BAA-125 / DSM 18197 / FERM 7344 / JCM 9153 / C-125</strain>
    </source>
</reference>
<proteinExistence type="inferred from homology"/>
<keyword id="KW-0235">DNA replication</keyword>
<keyword id="KW-0238">DNA-binding</keyword>
<keyword id="KW-0240">DNA-directed RNA polymerase</keyword>
<keyword id="KW-0460">Magnesium</keyword>
<keyword id="KW-0479">Metal-binding</keyword>
<keyword id="KW-0548">Nucleotidyltransferase</keyword>
<keyword id="KW-0639">Primosome</keyword>
<keyword id="KW-1185">Reference proteome</keyword>
<keyword id="KW-0804">Transcription</keyword>
<keyword id="KW-0808">Transferase</keyword>
<keyword id="KW-0862">Zinc</keyword>
<keyword id="KW-0863">Zinc-finger</keyword>